<evidence type="ECO:0000250" key="1">
    <source>
        <dbReference type="UniProtKB" id="P36873"/>
    </source>
</evidence>
<evidence type="ECO:0000255" key="2">
    <source>
        <dbReference type="PROSITE-ProRule" id="PRU00590"/>
    </source>
</evidence>
<evidence type="ECO:0000256" key="3">
    <source>
        <dbReference type="SAM" id="MobiDB-lite"/>
    </source>
</evidence>
<evidence type="ECO:0000269" key="4">
    <source>
    </source>
</evidence>
<evidence type="ECO:0000269" key="5">
    <source>
    </source>
</evidence>
<evidence type="ECO:0000303" key="6">
    <source>
    </source>
</evidence>
<evidence type="ECO:0000305" key="7"/>
<evidence type="ECO:0000305" key="8">
    <source>
    </source>
</evidence>
<name>PPZA_ASPFC</name>
<proteinExistence type="evidence at protein level"/>
<comment type="function">
    <text evidence="4 5">Catalytic subunit of protein phosphatase Z (PPZ) involved in iron assimilation (PubMed:25943523, PubMed:28753224). Regulates secondary metabolites production, including gliotoxin, pyripyropene A, fumagillin, fumiquinazoline A, triacetyl-fusarinine C, and helvolic acid (PubMed:25943523, PubMed:28753224). Plays a key role in pathogenicity (PubMed:28753224).</text>
</comment>
<comment type="catalytic activity">
    <reaction evidence="8">
        <text>O-phospho-L-seryl-[protein] + H2O = L-seryl-[protein] + phosphate</text>
        <dbReference type="Rhea" id="RHEA:20629"/>
        <dbReference type="Rhea" id="RHEA-COMP:9863"/>
        <dbReference type="Rhea" id="RHEA-COMP:11604"/>
        <dbReference type="ChEBI" id="CHEBI:15377"/>
        <dbReference type="ChEBI" id="CHEBI:29999"/>
        <dbReference type="ChEBI" id="CHEBI:43474"/>
        <dbReference type="ChEBI" id="CHEBI:83421"/>
        <dbReference type="EC" id="3.1.3.16"/>
    </reaction>
    <physiologicalReaction direction="left-to-right" evidence="8">
        <dbReference type="Rhea" id="RHEA:20630"/>
    </physiologicalReaction>
</comment>
<comment type="catalytic activity">
    <reaction evidence="8">
        <text>O-phospho-L-threonyl-[protein] + H2O = L-threonyl-[protein] + phosphate</text>
        <dbReference type="Rhea" id="RHEA:47004"/>
        <dbReference type="Rhea" id="RHEA-COMP:11060"/>
        <dbReference type="Rhea" id="RHEA-COMP:11605"/>
        <dbReference type="ChEBI" id="CHEBI:15377"/>
        <dbReference type="ChEBI" id="CHEBI:30013"/>
        <dbReference type="ChEBI" id="CHEBI:43474"/>
        <dbReference type="ChEBI" id="CHEBI:61977"/>
        <dbReference type="EC" id="3.1.3.16"/>
    </reaction>
    <physiologicalReaction direction="left-to-right" evidence="8">
        <dbReference type="Rhea" id="RHEA:47005"/>
    </physiologicalReaction>
</comment>
<comment type="cofactor">
    <cofactor evidence="1">
        <name>Mn(2+)</name>
        <dbReference type="ChEBI" id="CHEBI:29035"/>
    </cofactor>
    <text evidence="1">Binds 2 manganese ions per subunit.</text>
</comment>
<comment type="subunit">
    <text evidence="5">Interacts with at least 54 proteins, of which 31 are detected only after iron starvation and 22 are detected only in control conditions (PubMed:28753224). Only the regulatory subunit of the protein phosphatase PP1 (Afu1g04800/AFUB_005140) interacts with ppzA in both conditions (PubMed:28753224).</text>
</comment>
<comment type="subcellular location">
    <subcellularLocation>
        <location>Cytoplasm</location>
    </subcellularLocation>
</comment>
<comment type="disruption phenotype">
    <text evidence="4 5">Reduces sidC and sidG expression, slightly increases gliotoxin production, decreases growth in iron starvation conditions and leads to reduced conidiation at 44 degrees Celsius (PubMed:25943523). Reduces the production of pyripyropene A, fumagillin, fumiquinazoline A, triacetyl-fusarinine C, and helvolic acid (PubMed:28753224). Abolishes virulence in a neutropenic murine model of invasive pulmonary aspergillosis (PubMed:28753224).</text>
</comment>
<comment type="similarity">
    <text evidence="7">Belongs to the PPP phosphatase family. PP-Z subfamily.</text>
</comment>
<accession>B0XUR7</accession>
<reference key="1">
    <citation type="journal article" date="2008" name="PLoS Genet.">
        <title>Genomic islands in the pathogenic filamentous fungus Aspergillus fumigatus.</title>
        <authorList>
            <person name="Fedorova N.D."/>
            <person name="Khaldi N."/>
            <person name="Joardar V.S."/>
            <person name="Maiti R."/>
            <person name="Amedeo P."/>
            <person name="Anderson M.J."/>
            <person name="Crabtree J."/>
            <person name="Silva J.C."/>
            <person name="Badger J.H."/>
            <person name="Albarraq A."/>
            <person name="Angiuoli S."/>
            <person name="Bussey H."/>
            <person name="Bowyer P."/>
            <person name="Cotty P.J."/>
            <person name="Dyer P.S."/>
            <person name="Egan A."/>
            <person name="Galens K."/>
            <person name="Fraser-Liggett C.M."/>
            <person name="Haas B.J."/>
            <person name="Inman J.M."/>
            <person name="Kent R."/>
            <person name="Lemieux S."/>
            <person name="Malavazi I."/>
            <person name="Orvis J."/>
            <person name="Roemer T."/>
            <person name="Ronning C.M."/>
            <person name="Sundaram J.P."/>
            <person name="Sutton G."/>
            <person name="Turner G."/>
            <person name="Venter J.C."/>
            <person name="White O.R."/>
            <person name="Whitty B.R."/>
            <person name="Youngman P."/>
            <person name="Wolfe K.H."/>
            <person name="Goldman G.H."/>
            <person name="Wortman J.R."/>
            <person name="Jiang B."/>
            <person name="Denning D.W."/>
            <person name="Nierman W.C."/>
        </authorList>
    </citation>
    <scope>NUCLEOTIDE SEQUENCE [LARGE SCALE GENOMIC DNA]</scope>
    <source>
        <strain>CBS 144.89 / FGSC A1163 / CEA10</strain>
    </source>
</reference>
<reference key="2">
    <citation type="journal article" date="2015" name="G3 (Bethesda)">
        <title>Systematic Global Analysis of Genes Encoding Protein Phosphatases in Aspergillus fumigatus.</title>
        <authorList>
            <person name="Winkelstroeter L.K."/>
            <person name="Dolan S.K."/>
            <person name="Fernanda Dos Reis T."/>
            <person name="Bom V.L."/>
            <person name="Alves de Castro P."/>
            <person name="Hagiwara D."/>
            <person name="Alowni R."/>
            <person name="Jones G.W."/>
            <person name="Doyle S."/>
            <person name="Brown N.A."/>
            <person name="Goldman G.H."/>
        </authorList>
    </citation>
    <scope>FUNCTION</scope>
    <scope>DISRUPTION PHENOTYPE</scope>
</reference>
<reference key="3">
    <citation type="journal article" date="2017" name="Cell. Microbiol.">
        <title>Aspergillus fumigatus protein phosphatase PpzA is involved in iron assimilation, secondary metabolite production, and virulence.</title>
        <authorList>
            <person name="Manfiolli A.O."/>
            <person name="de Castro P.A."/>
            <person name="Dos Reis T.F."/>
            <person name="Dolan S."/>
            <person name="Doyle S."/>
            <person name="Jones G."/>
            <person name="Riano Pachon D.M."/>
            <person name="Ulas M."/>
            <person name="Noble L.M."/>
            <person name="Mattern D.J."/>
            <person name="Brakhage A.A."/>
            <person name="Valiante V."/>
            <person name="Silva-Rocha R."/>
            <person name="Bayram O."/>
            <person name="Goldman G.H."/>
        </authorList>
    </citation>
    <scope>FUNCTION</scope>
    <scope>DISRUPTION PHENOTYPE</scope>
    <scope>SUBUNIT</scope>
</reference>
<sequence>MGQSHSKGNSGPGDSLQSYPSFSRSDTKESLRSLRGSIRSKIRSSDSPRGSTAGLSDDKSDAASVKSTTSRRSSTNQSVQSPDDTPSQPDAPEPPPSPSLSSSLKRGHKDVNAMQQSGEVDHVSDVPPTGAAPTGPSTQKVGESILIKRENQLNPILDFIMNAPLETSGSPGMGMGALKSIDLDDMISRLLDAGYSTKVTKTVCLKNAEIMAICSAARELFLSQPALLELSAPVKIVGDVHGQYTDLIRLFEMCGFPPASNYLFLGDYVDRGKQSLETILLLLCYKLKYPENFFLLRGNHECANVTRVYGFYDECKRRCNIKIWKTFIDTFNCLPIAATVAGKIFCVHGGLSPSLSHMDDIRGIARPTDVPDYGLLNDLLWSDPADMEEDWEPNERGVSYCFGKKVIMNFLQRHDFDLVCRAHMVVEDGYEFYQDRILVTVFSAPNYCGEFDNWGAIMSVSGELLCSFELLKPLDSTALKNHIKKGRKERNSMLSSPVSPPLLRFVVAKEDHNLFVQHRRDACGLFLAYPSLVTSWGISR</sequence>
<organism>
    <name type="scientific">Aspergillus fumigatus (strain CBS 144.89 / FGSC A1163 / CEA10)</name>
    <name type="common">Neosartorya fumigata</name>
    <dbReference type="NCBI Taxonomy" id="451804"/>
    <lineage>
        <taxon>Eukaryota</taxon>
        <taxon>Fungi</taxon>
        <taxon>Dikarya</taxon>
        <taxon>Ascomycota</taxon>
        <taxon>Pezizomycotina</taxon>
        <taxon>Eurotiomycetes</taxon>
        <taxon>Eurotiomycetidae</taxon>
        <taxon>Eurotiales</taxon>
        <taxon>Aspergillaceae</taxon>
        <taxon>Aspergillus</taxon>
        <taxon>Aspergillus subgen. Fumigati</taxon>
    </lineage>
</organism>
<dbReference type="EC" id="3.1.3.16" evidence="8"/>
<dbReference type="EMBL" id="DS499595">
    <property type="protein sequence ID" value="EDP54052.1"/>
    <property type="molecule type" value="Genomic_DNA"/>
</dbReference>
<dbReference type="SMR" id="B0XUR7"/>
<dbReference type="EnsemblFungi" id="EDP54052">
    <property type="protein sequence ID" value="EDP54052"/>
    <property type="gene ID" value="AFUB_021020"/>
</dbReference>
<dbReference type="VEuPathDB" id="FungiDB:AFUB_021020"/>
<dbReference type="HOGENOM" id="CLU_004962_3_1_1"/>
<dbReference type="OrthoDB" id="66387at5052"/>
<dbReference type="PhylomeDB" id="B0XUR7"/>
<dbReference type="Proteomes" id="UP000001699">
    <property type="component" value="Unassembled WGS sequence"/>
</dbReference>
<dbReference type="GO" id="GO:0000324">
    <property type="term" value="C:fungal-type vacuole"/>
    <property type="evidence" value="ECO:0007669"/>
    <property type="project" value="EnsemblFungi"/>
</dbReference>
<dbReference type="GO" id="GO:0005634">
    <property type="term" value="C:nucleus"/>
    <property type="evidence" value="ECO:0007669"/>
    <property type="project" value="TreeGrafter"/>
</dbReference>
<dbReference type="GO" id="GO:0046872">
    <property type="term" value="F:metal ion binding"/>
    <property type="evidence" value="ECO:0007669"/>
    <property type="project" value="UniProtKB-KW"/>
</dbReference>
<dbReference type="GO" id="GO:0004722">
    <property type="term" value="F:protein serine/threonine phosphatase activity"/>
    <property type="evidence" value="ECO:0007669"/>
    <property type="project" value="UniProtKB-EC"/>
</dbReference>
<dbReference type="FunFam" id="3.60.21.10:FF:000006">
    <property type="entry name" value="Serine/threonine-protein phosphatase"/>
    <property type="match status" value="1"/>
</dbReference>
<dbReference type="Gene3D" id="3.60.21.10">
    <property type="match status" value="1"/>
</dbReference>
<dbReference type="InterPro" id="IPR004843">
    <property type="entry name" value="Calcineurin-like_PHP_ApaH"/>
</dbReference>
<dbReference type="InterPro" id="IPR029052">
    <property type="entry name" value="Metallo-depent_PP-like"/>
</dbReference>
<dbReference type="InterPro" id="IPR050341">
    <property type="entry name" value="PP1_catalytic_subunit"/>
</dbReference>
<dbReference type="InterPro" id="IPR011159">
    <property type="entry name" value="PPPtase_PPZ/Ppq1"/>
</dbReference>
<dbReference type="InterPro" id="IPR006186">
    <property type="entry name" value="Ser/Thr-sp_prot-phosphatase"/>
</dbReference>
<dbReference type="InterPro" id="IPR031675">
    <property type="entry name" value="STPPase_N"/>
</dbReference>
<dbReference type="PANTHER" id="PTHR11668">
    <property type="entry name" value="SERINE/THREONINE PROTEIN PHOSPHATASE"/>
    <property type="match status" value="1"/>
</dbReference>
<dbReference type="PANTHER" id="PTHR11668:SF484">
    <property type="entry name" value="SERINE_THREONINE-PROTEIN PHOSPHATASE PP-Z1-RELATED"/>
    <property type="match status" value="1"/>
</dbReference>
<dbReference type="Pfam" id="PF00149">
    <property type="entry name" value="Metallophos"/>
    <property type="match status" value="1"/>
</dbReference>
<dbReference type="Pfam" id="PF16891">
    <property type="entry name" value="STPPase_N"/>
    <property type="match status" value="1"/>
</dbReference>
<dbReference type="PIRSF" id="PIRSF000909">
    <property type="entry name" value="PPPtase_PPZ"/>
    <property type="match status" value="1"/>
</dbReference>
<dbReference type="PRINTS" id="PR00114">
    <property type="entry name" value="STPHPHTASE"/>
</dbReference>
<dbReference type="SMART" id="SM00156">
    <property type="entry name" value="PP2Ac"/>
    <property type="match status" value="1"/>
</dbReference>
<dbReference type="SUPFAM" id="SSF56300">
    <property type="entry name" value="Metallo-dependent phosphatases"/>
    <property type="match status" value="1"/>
</dbReference>
<dbReference type="PROSITE" id="PS00125">
    <property type="entry name" value="SER_THR_PHOSPHATASE"/>
    <property type="match status" value="1"/>
</dbReference>
<keyword id="KW-0963">Cytoplasm</keyword>
<keyword id="KW-0378">Hydrolase</keyword>
<keyword id="KW-0464">Manganese</keyword>
<keyword id="KW-0479">Metal-binding</keyword>
<keyword id="KW-0904">Protein phosphatase</keyword>
<feature type="chain" id="PRO_0000454887" description="Serine/threonine-protein phosphatase ppzA">
    <location>
        <begin position="1"/>
        <end position="540"/>
    </location>
</feature>
<feature type="domain" description="Phosphatase tensin-type" evidence="2">
    <location>
        <begin position="258"/>
        <end position="540"/>
    </location>
</feature>
<feature type="region of interest" description="Disordered" evidence="3">
    <location>
        <begin position="1"/>
        <end position="108"/>
    </location>
</feature>
<feature type="region of interest" description="Disordered" evidence="3">
    <location>
        <begin position="120"/>
        <end position="140"/>
    </location>
</feature>
<feature type="compositionally biased region" description="Polar residues" evidence="3">
    <location>
        <begin position="15"/>
        <end position="24"/>
    </location>
</feature>
<feature type="compositionally biased region" description="Polar residues" evidence="3">
    <location>
        <begin position="45"/>
        <end position="54"/>
    </location>
</feature>
<feature type="compositionally biased region" description="Low complexity" evidence="3">
    <location>
        <begin position="62"/>
        <end position="88"/>
    </location>
</feature>
<feature type="compositionally biased region" description="Pro residues" evidence="3">
    <location>
        <begin position="89"/>
        <end position="98"/>
    </location>
</feature>
<feature type="compositionally biased region" description="Low complexity" evidence="3">
    <location>
        <begin position="127"/>
        <end position="136"/>
    </location>
</feature>
<feature type="active site" description="Proton donor" evidence="1">
    <location>
        <position position="300"/>
    </location>
</feature>
<feature type="binding site" evidence="1">
    <location>
        <position position="239"/>
    </location>
    <ligand>
        <name>Mn(2+)</name>
        <dbReference type="ChEBI" id="CHEBI:29035"/>
        <label>1</label>
    </ligand>
</feature>
<feature type="binding site" evidence="1">
    <location>
        <position position="241"/>
    </location>
    <ligand>
        <name>Mn(2+)</name>
        <dbReference type="ChEBI" id="CHEBI:29035"/>
        <label>1</label>
    </ligand>
</feature>
<feature type="binding site" evidence="1">
    <location>
        <position position="267"/>
    </location>
    <ligand>
        <name>Mn(2+)</name>
        <dbReference type="ChEBI" id="CHEBI:29035"/>
        <label>1</label>
    </ligand>
</feature>
<feature type="binding site" evidence="1">
    <location>
        <position position="267"/>
    </location>
    <ligand>
        <name>Mn(2+)</name>
        <dbReference type="ChEBI" id="CHEBI:29035"/>
        <label>2</label>
    </ligand>
</feature>
<feature type="binding site" evidence="1">
    <location>
        <position position="299"/>
    </location>
    <ligand>
        <name>Mn(2+)</name>
        <dbReference type="ChEBI" id="CHEBI:29035"/>
        <label>2</label>
    </ligand>
</feature>
<feature type="binding site" evidence="1">
    <location>
        <position position="348"/>
    </location>
    <ligand>
        <name>Mn(2+)</name>
        <dbReference type="ChEBI" id="CHEBI:29035"/>
        <label>2</label>
    </ligand>
</feature>
<feature type="binding site" evidence="1">
    <location>
        <position position="423"/>
    </location>
    <ligand>
        <name>Mn(2+)</name>
        <dbReference type="ChEBI" id="CHEBI:29035"/>
        <label>2</label>
    </ligand>
</feature>
<protein>
    <recommendedName>
        <fullName evidence="6">Serine/threonine-protein phosphatase ppzA</fullName>
        <ecNumber evidence="8">3.1.3.16</ecNumber>
    </recommendedName>
</protein>
<gene>
    <name evidence="6" type="primary">ppzA</name>
    <name type="ORF">AFUB_021020</name>
</gene>